<reference key="1">
    <citation type="journal article" date="2009" name="Genome Res.">
        <title>Genome structure of a Saccharomyces cerevisiae strain widely used in bioethanol production.</title>
        <authorList>
            <person name="Argueso J.L."/>
            <person name="Carazzolle M.F."/>
            <person name="Mieczkowski P.A."/>
            <person name="Duarte F.M."/>
            <person name="Netto O.V.C."/>
            <person name="Missawa S.K."/>
            <person name="Galzerani F."/>
            <person name="Costa G.G.L."/>
            <person name="Vidal R.O."/>
            <person name="Noronha M.F."/>
            <person name="Dominska M."/>
            <person name="Andrietta M.G.S."/>
            <person name="Andrietta S.R."/>
            <person name="Cunha A.F."/>
            <person name="Gomes L.H."/>
            <person name="Tavares F.C.A."/>
            <person name="Alcarde A.R."/>
            <person name="Dietrich F.S."/>
            <person name="McCusker J.H."/>
            <person name="Petes T.D."/>
            <person name="Pereira G.A.G."/>
        </authorList>
    </citation>
    <scope>NUCLEOTIDE SEQUENCE [LARGE SCALE GENOMIC DNA]</scope>
    <source>
        <strain>JAY291</strain>
    </source>
</reference>
<accession>C7GQ65</accession>
<proteinExistence type="inferred from homology"/>
<evidence type="ECO:0000250" key="1">
    <source>
        <dbReference type="UniProtKB" id="P05374"/>
    </source>
</evidence>
<evidence type="ECO:0000255" key="2">
    <source>
        <dbReference type="HAMAP-Rule" id="MF_03217"/>
    </source>
</evidence>
<dbReference type="EC" id="2.1.1.17" evidence="2"/>
<dbReference type="EMBL" id="ACFL01000112">
    <property type="protein sequence ID" value="EEU07057.1"/>
    <property type="molecule type" value="Genomic_DNA"/>
</dbReference>
<dbReference type="UniPathway" id="UPA00753"/>
<dbReference type="Proteomes" id="UP000008073">
    <property type="component" value="Unassembled WGS sequence"/>
</dbReference>
<dbReference type="GO" id="GO:0005789">
    <property type="term" value="C:endoplasmic reticulum membrane"/>
    <property type="evidence" value="ECO:0007669"/>
    <property type="project" value="UniProtKB-SubCell"/>
</dbReference>
<dbReference type="GO" id="GO:0004608">
    <property type="term" value="F:phosphatidylethanolamine N-methyltransferase activity"/>
    <property type="evidence" value="ECO:0007669"/>
    <property type="project" value="UniProtKB-UniRule"/>
</dbReference>
<dbReference type="GO" id="GO:0032259">
    <property type="term" value="P:methylation"/>
    <property type="evidence" value="ECO:0007669"/>
    <property type="project" value="UniProtKB-KW"/>
</dbReference>
<dbReference type="GO" id="GO:0006656">
    <property type="term" value="P:phosphatidylcholine biosynthetic process"/>
    <property type="evidence" value="ECO:0007669"/>
    <property type="project" value="UniProtKB-UniRule"/>
</dbReference>
<dbReference type="FunFam" id="1.20.120.1630:FF:000016">
    <property type="entry name" value="Phosphatidylethanolamine N-methyltransferase"/>
    <property type="match status" value="1"/>
</dbReference>
<dbReference type="Gene3D" id="1.20.120.1630">
    <property type="match status" value="2"/>
</dbReference>
<dbReference type="Gene3D" id="2.60.40.2840">
    <property type="match status" value="1"/>
</dbReference>
<dbReference type="HAMAP" id="MF_03217">
    <property type="entry name" value="PEMT"/>
    <property type="match status" value="1"/>
</dbReference>
<dbReference type="InterPro" id="IPR007318">
    <property type="entry name" value="Phopholipid_MeTrfase"/>
</dbReference>
<dbReference type="InterPro" id="IPR016219">
    <property type="entry name" value="Phosphatid-EA_MeTrfase_fun"/>
</dbReference>
<dbReference type="PANTHER" id="PTHR32138">
    <property type="entry name" value="PHOSPHATIDYLETHANOLAMINE N-METHYLTRANSFERASE"/>
    <property type="match status" value="1"/>
</dbReference>
<dbReference type="PANTHER" id="PTHR32138:SF0">
    <property type="entry name" value="PHOSPHATIDYLETHANOLAMINE N-METHYLTRANSFERASE"/>
    <property type="match status" value="1"/>
</dbReference>
<dbReference type="Pfam" id="PF04191">
    <property type="entry name" value="PEMT"/>
    <property type="match status" value="2"/>
</dbReference>
<dbReference type="PIRSF" id="PIRSF000383">
    <property type="entry name" value="PEAMT"/>
    <property type="match status" value="1"/>
</dbReference>
<dbReference type="PROSITE" id="PS51598">
    <property type="entry name" value="SAM_CHO2"/>
    <property type="match status" value="1"/>
</dbReference>
<keyword id="KW-0007">Acetylation</keyword>
<keyword id="KW-0256">Endoplasmic reticulum</keyword>
<keyword id="KW-0444">Lipid biosynthesis</keyword>
<keyword id="KW-0443">Lipid metabolism</keyword>
<keyword id="KW-0472">Membrane</keyword>
<keyword id="KW-0489">Methyltransferase</keyword>
<keyword id="KW-0594">Phospholipid biosynthesis</keyword>
<keyword id="KW-1208">Phospholipid metabolism</keyword>
<keyword id="KW-0949">S-adenosyl-L-methionine</keyword>
<keyword id="KW-0808">Transferase</keyword>
<keyword id="KW-0812">Transmembrane</keyword>
<keyword id="KW-1133">Transmembrane helix</keyword>
<sequence length="869" mass="101222">MSSCKTTLSEMVGSVTKDRGTINVKARTRSSNVTFKPPVTHDMVRSLFDPTLKKSLLEKCIALAIISNFFICYWVFQRFGLQFTKYFFLVQYLFWRIAYNLGIGLVLHYQSHYETLTNCAKTHAIFSKIPHNKDANSNFSTNSNSFSEKFWNFIRKFCQYEIRSKMPKEYDLFAYPEEINVWLIFRQFVDLILMQDFVTYIIYVYLSIPYSWVQIFNWRSLLGVILILFNIWVKLDAHRVVKDYAWYWGDFFFLEESELIFDGVFNISPHPMYSIGYLGYYGLSLICNDYKVLLVSVFGHYSQFLFLKYVENPHIERTYGDGTDSDSQMNSRIDDLISKENYDYSRPLINMGLSFNNFNKLRFTDYFTIGTVAALMLGAIMNARFINLNYLFITVFVTKLVSWLFISTILYKQSQSKWFTRLFLENGYTQVYSYEQWQFIYNYYLVLTYTLMIIYTGLQIWSNFSNINNSQLIFGLILVALQTWCDKETRLAISDFGWFYGDFFLSNYISTRKLTSQGIYRYLNHPEAVLGVVGVWGTVLMTNFAVTNIILAVLWTLTNFILVKFIETPHVNKIYGKTKRVSGVGKTLLGLKPLRQVSDIVNRIENIIIKSLVDESKNSNGGAELLPKNYQDNKEWNILIQEAMDSVATRLSPYCELKIENEQIETNFVLPTPVTLNWKMPIELYNGDDWIGLYKVIDTRADREKTRVGSGGHWSATSKDSYMNHGLRHKESVTEIKATEKYVQGKVTFDTSLLYFENGIYEFRYHSGNSHKVLLISTPFEISLPVLNTTTPELFEKDLTEFLTKVNVLKDGKFRPLGNKFFGMDSLKQLIKNSIGVELSSEYMRRVNGDAHVISHRAWDIKQTLDSLA</sequence>
<protein>
    <recommendedName>
        <fullName evidence="2">Phosphatidylethanolamine N-methyltransferase</fullName>
        <shortName evidence="2">PE methyltransferase</shortName>
        <shortName evidence="2">PEAMT</shortName>
        <shortName evidence="2">PEMT</shortName>
        <ecNumber evidence="2">2.1.1.17</ecNumber>
    </recommendedName>
</protein>
<feature type="initiator methionine" description="Removed" evidence="1">
    <location>
        <position position="1"/>
    </location>
</feature>
<feature type="chain" id="PRO_0000405913" description="Phosphatidylethanolamine N-methyltransferase">
    <location>
        <begin position="2"/>
        <end position="869"/>
    </location>
</feature>
<feature type="topological domain" description="Lumenal" evidence="2">
    <location>
        <begin position="2"/>
        <end position="55"/>
    </location>
</feature>
<feature type="transmembrane region" description="Helical" evidence="2">
    <location>
        <begin position="56"/>
        <end position="76"/>
    </location>
</feature>
<feature type="topological domain" description="Cytoplasmic" evidence="2">
    <location>
        <begin position="77"/>
        <end position="86"/>
    </location>
</feature>
<feature type="transmembrane region" description="Helical" evidence="2">
    <location>
        <begin position="87"/>
        <end position="107"/>
    </location>
</feature>
<feature type="topological domain" description="Lumenal" evidence="2">
    <location>
        <begin position="108"/>
        <end position="187"/>
    </location>
</feature>
<feature type="transmembrane region" description="Helical" evidence="2">
    <location>
        <begin position="188"/>
        <end position="208"/>
    </location>
</feature>
<feature type="topological domain" description="Cytoplasmic" evidence="2">
    <location>
        <begin position="209"/>
        <end position="212"/>
    </location>
</feature>
<feature type="transmembrane region" description="Helical" evidence="2">
    <location>
        <begin position="213"/>
        <end position="233"/>
    </location>
</feature>
<feature type="topological domain" description="Lumenal" evidence="2">
    <location>
        <begin position="234"/>
        <end position="258"/>
    </location>
</feature>
<feature type="transmembrane region" description="Helical" evidence="2">
    <location>
        <begin position="259"/>
        <end position="279"/>
    </location>
</feature>
<feature type="topological domain" description="Cytoplasmic" evidence="2">
    <location>
        <begin position="280"/>
        <end position="291"/>
    </location>
</feature>
<feature type="transmembrane region" description="Helical" evidence="2">
    <location>
        <begin position="292"/>
        <end position="310"/>
    </location>
</feature>
<feature type="topological domain" description="Lumenal" evidence="2">
    <location>
        <begin position="311"/>
        <end position="362"/>
    </location>
</feature>
<feature type="transmembrane region" description="Helical" evidence="2">
    <location>
        <begin position="363"/>
        <end position="383"/>
    </location>
</feature>
<feature type="topological domain" description="Cytoplasmic" evidence="2">
    <location>
        <begin position="384"/>
        <end position="389"/>
    </location>
</feature>
<feature type="transmembrane region" description="Helical" evidence="2">
    <location>
        <begin position="390"/>
        <end position="410"/>
    </location>
</feature>
<feature type="topological domain" description="Lumenal" evidence="2">
    <location>
        <begin position="411"/>
        <end position="439"/>
    </location>
</feature>
<feature type="transmembrane region" description="Helical" evidence="2">
    <location>
        <begin position="440"/>
        <end position="460"/>
    </location>
</feature>
<feature type="topological domain" description="Cytoplasmic" evidence="2">
    <location>
        <begin position="461"/>
        <end position="463"/>
    </location>
</feature>
<feature type="transmembrane region" description="Helical" evidence="2">
    <location>
        <begin position="464"/>
        <end position="484"/>
    </location>
</feature>
<feature type="topological domain" description="Lumenal" evidence="2">
    <location>
        <begin position="485"/>
        <end position="534"/>
    </location>
</feature>
<feature type="transmembrane region" description="Helical" evidence="2">
    <location>
        <begin position="535"/>
        <end position="555"/>
    </location>
</feature>
<feature type="topological domain" description="Cytoplasmic" evidence="2">
    <location>
        <begin position="556"/>
        <end position="869"/>
    </location>
</feature>
<feature type="modified residue" description="N-acetylserine" evidence="1">
    <location>
        <position position="2"/>
    </location>
</feature>
<comment type="function">
    <text evidence="2">Catalyzes the first step of the methylation pathway of phosphatidylcholine biosynthesis, the SAM-dependent methylation of phosphatidylethanolamine (PE) to phosphatidylmonomethylethanolamine (PMME).</text>
</comment>
<comment type="catalytic activity">
    <reaction evidence="2">
        <text>a 1,2-diacyl-sn-glycero-3-phosphoethanolamine + S-adenosyl-L-methionine = a 1,2-diacyl-sn-glycero-3-phospho-N-methylethanolamine + S-adenosyl-L-homocysteine + H(+)</text>
        <dbReference type="Rhea" id="RHEA:11164"/>
        <dbReference type="ChEBI" id="CHEBI:15378"/>
        <dbReference type="ChEBI" id="CHEBI:57856"/>
        <dbReference type="ChEBI" id="CHEBI:59789"/>
        <dbReference type="ChEBI" id="CHEBI:64573"/>
        <dbReference type="ChEBI" id="CHEBI:64612"/>
        <dbReference type="EC" id="2.1.1.17"/>
    </reaction>
</comment>
<comment type="pathway">
    <text evidence="2">Phospholipid metabolism; phosphatidylcholine biosynthesis.</text>
</comment>
<comment type="subcellular location">
    <subcellularLocation>
        <location evidence="2">Endoplasmic reticulum membrane</location>
        <topology evidence="2">Multi-pass membrane protein</topology>
    </subcellularLocation>
</comment>
<comment type="similarity">
    <text evidence="2">Belongs to the class VI-like SAM-binding methyltransferase superfamily. CHO2 family.</text>
</comment>
<gene>
    <name type="primary">CHO2</name>
    <name type="ORF">C1Q_02471</name>
</gene>
<organism>
    <name type="scientific">Saccharomyces cerevisiae (strain JAY291)</name>
    <name type="common">Baker's yeast</name>
    <dbReference type="NCBI Taxonomy" id="574961"/>
    <lineage>
        <taxon>Eukaryota</taxon>
        <taxon>Fungi</taxon>
        <taxon>Dikarya</taxon>
        <taxon>Ascomycota</taxon>
        <taxon>Saccharomycotina</taxon>
        <taxon>Saccharomycetes</taxon>
        <taxon>Saccharomycetales</taxon>
        <taxon>Saccharomycetaceae</taxon>
        <taxon>Saccharomyces</taxon>
    </lineage>
</organism>
<name>CHO2_YEAS2</name>